<name>TR64B_HUMAN</name>
<protein>
    <recommendedName>
        <fullName>Tripartite motif-containing protein 64B</fullName>
    </recommendedName>
</protein>
<evidence type="ECO:0000255" key="1"/>
<evidence type="ECO:0000255" key="2">
    <source>
        <dbReference type="PROSITE-ProRule" id="PRU00024"/>
    </source>
</evidence>
<evidence type="ECO:0000255" key="3">
    <source>
        <dbReference type="PROSITE-ProRule" id="PRU00175"/>
    </source>
</evidence>
<evidence type="ECO:0000255" key="4">
    <source>
        <dbReference type="PROSITE-ProRule" id="PRU00548"/>
    </source>
</evidence>
<evidence type="ECO:0000305" key="5"/>
<dbReference type="EMBL" id="AP005435">
    <property type="status" value="NOT_ANNOTATED_CDS"/>
    <property type="molecule type" value="Genomic_DNA"/>
</dbReference>
<dbReference type="CCDS" id="CCDS53693.1"/>
<dbReference type="RefSeq" id="NP_001157869.1">
    <property type="nucleotide sequence ID" value="NM_001164397.3"/>
</dbReference>
<dbReference type="RefSeq" id="XP_011541256.1">
    <property type="nucleotide sequence ID" value="XM_011542954.2"/>
</dbReference>
<dbReference type="SMR" id="A6NI03"/>
<dbReference type="FunCoup" id="A6NI03">
    <property type="interactions" value="13"/>
</dbReference>
<dbReference type="STRING" id="9606.ENSP00000332969"/>
<dbReference type="iPTMnet" id="A6NI03"/>
<dbReference type="PhosphoSitePlus" id="A6NI03"/>
<dbReference type="BioMuta" id="TRIM64B"/>
<dbReference type="MassIVE" id="A6NI03"/>
<dbReference type="PaxDb" id="9606-ENSP00000332969"/>
<dbReference type="PeptideAtlas" id="A6NI03"/>
<dbReference type="Antibodypedia" id="67810">
    <property type="antibodies" value="4 antibodies from 4 providers"/>
</dbReference>
<dbReference type="DNASU" id="642446"/>
<dbReference type="Ensembl" id="ENST00000329862.7">
    <property type="protein sequence ID" value="ENSP00000332969.6"/>
    <property type="gene ID" value="ENSG00000189253.8"/>
</dbReference>
<dbReference type="GeneID" id="642446"/>
<dbReference type="KEGG" id="hsa:642446"/>
<dbReference type="MANE-Select" id="ENST00000329862.7">
    <property type="protein sequence ID" value="ENSP00000332969.6"/>
    <property type="RefSeq nucleotide sequence ID" value="NM_001164397.3"/>
    <property type="RefSeq protein sequence ID" value="NP_001157869.1"/>
</dbReference>
<dbReference type="UCSC" id="uc021qoo.2">
    <property type="organism name" value="human"/>
</dbReference>
<dbReference type="AGR" id="HGNC:37147"/>
<dbReference type="CTD" id="642446"/>
<dbReference type="GeneCards" id="TRIM64B"/>
<dbReference type="HGNC" id="HGNC:37147">
    <property type="gene designation" value="TRIM64B"/>
</dbReference>
<dbReference type="HPA" id="ENSG00000189253">
    <property type="expression patterns" value="Tissue enriched (placenta)"/>
</dbReference>
<dbReference type="neXtProt" id="NX_A6NI03"/>
<dbReference type="OpenTargets" id="ENSG00000189253"/>
<dbReference type="PharmGKB" id="PA165543724"/>
<dbReference type="VEuPathDB" id="HostDB:ENSG00000189253"/>
<dbReference type="eggNOG" id="KOG2177">
    <property type="taxonomic scope" value="Eukaryota"/>
</dbReference>
<dbReference type="GeneTree" id="ENSGT00940000163440"/>
<dbReference type="HOGENOM" id="CLU_013137_0_3_1"/>
<dbReference type="InParanoid" id="A6NI03"/>
<dbReference type="OMA" id="NNSHRIC"/>
<dbReference type="OrthoDB" id="9521923at2759"/>
<dbReference type="PAN-GO" id="A6NI03">
    <property type="GO annotations" value="5 GO annotations based on evolutionary models"/>
</dbReference>
<dbReference type="PhylomeDB" id="A6NI03"/>
<dbReference type="TreeFam" id="TF338674"/>
<dbReference type="SIGNOR" id="A6NI03"/>
<dbReference type="BioGRID-ORCS" id="642446">
    <property type="hits" value="26 hits in 1082 CRISPR screens"/>
</dbReference>
<dbReference type="GenomeRNAi" id="642446"/>
<dbReference type="Pharos" id="A6NI03">
    <property type="development level" value="Tdark"/>
</dbReference>
<dbReference type="Proteomes" id="UP000005640">
    <property type="component" value="Chromosome 11"/>
</dbReference>
<dbReference type="RNAct" id="A6NI03">
    <property type="molecule type" value="protein"/>
</dbReference>
<dbReference type="Bgee" id="ENSG00000189253">
    <property type="expression patterns" value="Expressed in placenta and 5 other cell types or tissues"/>
</dbReference>
<dbReference type="GO" id="GO:0005737">
    <property type="term" value="C:cytoplasm"/>
    <property type="evidence" value="ECO:0000318"/>
    <property type="project" value="GO_Central"/>
</dbReference>
<dbReference type="GO" id="GO:0061630">
    <property type="term" value="F:ubiquitin protein ligase activity"/>
    <property type="evidence" value="ECO:0000318"/>
    <property type="project" value="GO_Central"/>
</dbReference>
<dbReference type="GO" id="GO:0008270">
    <property type="term" value="F:zinc ion binding"/>
    <property type="evidence" value="ECO:0007669"/>
    <property type="project" value="UniProtKB-KW"/>
</dbReference>
<dbReference type="GO" id="GO:0045087">
    <property type="term" value="P:innate immune response"/>
    <property type="evidence" value="ECO:0000318"/>
    <property type="project" value="GO_Central"/>
</dbReference>
<dbReference type="GO" id="GO:0010468">
    <property type="term" value="P:regulation of gene expression"/>
    <property type="evidence" value="ECO:0000318"/>
    <property type="project" value="GO_Central"/>
</dbReference>
<dbReference type="CDD" id="cd19783">
    <property type="entry name" value="Bbox2_TRIM43-like"/>
    <property type="match status" value="1"/>
</dbReference>
<dbReference type="CDD" id="cd16603">
    <property type="entry name" value="RING-HC_TRIM43-like_C-IV"/>
    <property type="match status" value="1"/>
</dbReference>
<dbReference type="Gene3D" id="2.60.120.920">
    <property type="match status" value="1"/>
</dbReference>
<dbReference type="Gene3D" id="3.30.160.60">
    <property type="entry name" value="Classic Zinc Finger"/>
    <property type="match status" value="1"/>
</dbReference>
<dbReference type="Gene3D" id="3.30.40.10">
    <property type="entry name" value="Zinc/RING finger domain, C3HC4 (zinc finger)"/>
    <property type="match status" value="1"/>
</dbReference>
<dbReference type="InterPro" id="IPR001870">
    <property type="entry name" value="B30.2/SPRY"/>
</dbReference>
<dbReference type="InterPro" id="IPR043136">
    <property type="entry name" value="B30.2/SPRY_sf"/>
</dbReference>
<dbReference type="InterPro" id="IPR003879">
    <property type="entry name" value="Butyrophylin_SPRY"/>
</dbReference>
<dbReference type="InterPro" id="IPR013320">
    <property type="entry name" value="ConA-like_dom_sf"/>
</dbReference>
<dbReference type="InterPro" id="IPR003877">
    <property type="entry name" value="SPRY_dom"/>
</dbReference>
<dbReference type="InterPro" id="IPR050143">
    <property type="entry name" value="TRIM/RBCC"/>
</dbReference>
<dbReference type="InterPro" id="IPR000315">
    <property type="entry name" value="Znf_B-box"/>
</dbReference>
<dbReference type="InterPro" id="IPR018957">
    <property type="entry name" value="Znf_C3HC4_RING-type"/>
</dbReference>
<dbReference type="InterPro" id="IPR001841">
    <property type="entry name" value="Znf_RING"/>
</dbReference>
<dbReference type="InterPro" id="IPR013083">
    <property type="entry name" value="Znf_RING/FYVE/PHD"/>
</dbReference>
<dbReference type="InterPro" id="IPR017907">
    <property type="entry name" value="Znf_RING_CS"/>
</dbReference>
<dbReference type="PANTHER" id="PTHR24103">
    <property type="entry name" value="E3 UBIQUITIN-PROTEIN LIGASE TRIM"/>
    <property type="match status" value="1"/>
</dbReference>
<dbReference type="Pfam" id="PF00622">
    <property type="entry name" value="SPRY"/>
    <property type="match status" value="1"/>
</dbReference>
<dbReference type="Pfam" id="PF00643">
    <property type="entry name" value="zf-B_box"/>
    <property type="match status" value="1"/>
</dbReference>
<dbReference type="Pfam" id="PF00097">
    <property type="entry name" value="zf-C3HC4"/>
    <property type="match status" value="1"/>
</dbReference>
<dbReference type="PRINTS" id="PR01407">
    <property type="entry name" value="BUTYPHLNCDUF"/>
</dbReference>
<dbReference type="SMART" id="SM00336">
    <property type="entry name" value="BBOX"/>
    <property type="match status" value="1"/>
</dbReference>
<dbReference type="SMART" id="SM00184">
    <property type="entry name" value="RING"/>
    <property type="match status" value="1"/>
</dbReference>
<dbReference type="SMART" id="SM00449">
    <property type="entry name" value="SPRY"/>
    <property type="match status" value="1"/>
</dbReference>
<dbReference type="SUPFAM" id="SSF57845">
    <property type="entry name" value="B-box zinc-binding domain"/>
    <property type="match status" value="1"/>
</dbReference>
<dbReference type="SUPFAM" id="SSF49899">
    <property type="entry name" value="Concanavalin A-like lectins/glucanases"/>
    <property type="match status" value="1"/>
</dbReference>
<dbReference type="SUPFAM" id="SSF57850">
    <property type="entry name" value="RING/U-box"/>
    <property type="match status" value="1"/>
</dbReference>
<dbReference type="PROSITE" id="PS50188">
    <property type="entry name" value="B302_SPRY"/>
    <property type="match status" value="1"/>
</dbReference>
<dbReference type="PROSITE" id="PS50119">
    <property type="entry name" value="ZF_BBOX"/>
    <property type="match status" value="1"/>
</dbReference>
<dbReference type="PROSITE" id="PS00518">
    <property type="entry name" value="ZF_RING_1"/>
    <property type="match status" value="1"/>
</dbReference>
<dbReference type="PROSITE" id="PS50089">
    <property type="entry name" value="ZF_RING_2"/>
    <property type="match status" value="1"/>
</dbReference>
<accession>A6NI03</accession>
<feature type="chain" id="PRO_0000340247" description="Tripartite motif-containing protein 64B">
    <location>
        <begin position="1"/>
        <end position="449"/>
    </location>
</feature>
<feature type="domain" description="B30.2/SPRY" evidence="4">
    <location>
        <begin position="268"/>
        <end position="449"/>
    </location>
</feature>
<feature type="zinc finger region" description="RING-type" evidence="3">
    <location>
        <begin position="15"/>
        <end position="56"/>
    </location>
</feature>
<feature type="zinc finger region" description="B box-type" evidence="2">
    <location>
        <begin position="87"/>
        <end position="128"/>
    </location>
</feature>
<feature type="coiled-coil region" evidence="1">
    <location>
        <begin position="189"/>
        <end position="225"/>
    </location>
</feature>
<feature type="binding site" evidence="2">
    <location>
        <position position="92"/>
    </location>
    <ligand>
        <name>Zn(2+)</name>
        <dbReference type="ChEBI" id="CHEBI:29105"/>
    </ligand>
</feature>
<feature type="binding site" evidence="2">
    <location>
        <position position="95"/>
    </location>
    <ligand>
        <name>Zn(2+)</name>
        <dbReference type="ChEBI" id="CHEBI:29105"/>
    </ligand>
</feature>
<feature type="binding site" evidence="2">
    <location>
        <position position="114"/>
    </location>
    <ligand>
        <name>Zn(2+)</name>
        <dbReference type="ChEBI" id="CHEBI:29105"/>
    </ligand>
</feature>
<feature type="binding site" evidence="2">
    <location>
        <position position="120"/>
    </location>
    <ligand>
        <name>Zn(2+)</name>
        <dbReference type="ChEBI" id="CHEBI:29105"/>
    </ligand>
</feature>
<proteinExistence type="inferred from homology"/>
<gene>
    <name type="primary">TRIM64B</name>
</gene>
<comment type="similarity">
    <text evidence="5">Belongs to the TRIM/RBCC family.</text>
</comment>
<reference key="1">
    <citation type="journal article" date="2006" name="Nature">
        <title>Human chromosome 11 DNA sequence and analysis including novel gene identification.</title>
        <authorList>
            <person name="Taylor T.D."/>
            <person name="Noguchi H."/>
            <person name="Totoki Y."/>
            <person name="Toyoda A."/>
            <person name="Kuroki Y."/>
            <person name="Dewar K."/>
            <person name="Lloyd C."/>
            <person name="Itoh T."/>
            <person name="Takeda T."/>
            <person name="Kim D.-W."/>
            <person name="She X."/>
            <person name="Barlow K.F."/>
            <person name="Bloom T."/>
            <person name="Bruford E."/>
            <person name="Chang J.L."/>
            <person name="Cuomo C.A."/>
            <person name="Eichler E."/>
            <person name="FitzGerald M.G."/>
            <person name="Jaffe D.B."/>
            <person name="LaButti K."/>
            <person name="Nicol R."/>
            <person name="Park H.-S."/>
            <person name="Seaman C."/>
            <person name="Sougnez C."/>
            <person name="Yang X."/>
            <person name="Zimmer A.R."/>
            <person name="Zody M.C."/>
            <person name="Birren B.W."/>
            <person name="Nusbaum C."/>
            <person name="Fujiyama A."/>
            <person name="Hattori M."/>
            <person name="Rogers J."/>
            <person name="Lander E.S."/>
            <person name="Sakaki Y."/>
        </authorList>
    </citation>
    <scope>NUCLEOTIDE SEQUENCE [LARGE SCALE GENOMIC DNA]</scope>
</reference>
<keyword id="KW-0175">Coiled coil</keyword>
<keyword id="KW-0479">Metal-binding</keyword>
<keyword id="KW-1185">Reference proteome</keyword>
<keyword id="KW-0862">Zinc</keyword>
<keyword id="KW-0863">Zinc-finger</keyword>
<organism>
    <name type="scientific">Homo sapiens</name>
    <name type="common">Human</name>
    <dbReference type="NCBI Taxonomy" id="9606"/>
    <lineage>
        <taxon>Eukaryota</taxon>
        <taxon>Metazoa</taxon>
        <taxon>Chordata</taxon>
        <taxon>Craniata</taxon>
        <taxon>Vertebrata</taxon>
        <taxon>Euteleostomi</taxon>
        <taxon>Mammalia</taxon>
        <taxon>Eutheria</taxon>
        <taxon>Euarchontoglires</taxon>
        <taxon>Primates</taxon>
        <taxon>Haplorrhini</taxon>
        <taxon>Catarrhini</taxon>
        <taxon>Hominidae</taxon>
        <taxon>Homo</taxon>
    </lineage>
</organism>
<sequence length="449" mass="51557">MDSDDLQVFQNELICCICVNYFIDPVTIDCGHSFCRPCLCLCSEEGRAPMRCPSCRKTSEKPNFNTNLVLKKLSSLARQTRPQNINSSDNICVLHEETKELFCEADKRLLCGPCSESPEHMAHSHSPIGWAAEECREKLIKEMDYLWEINQETRNNLNQETSTFHSLKDYVSVRKRIITIQYQKMPIFLDEEEQRHLQALEREAEELFQQLQDSQVRMTQHLERMKDMYRELWETCHMPDVVLLQDVRNVSARTDLAQMQKPQPVNPELTSWCITGVLDMLNNFRVDSALSTEMIPCYISLSEDVRYVIFGDDHLSAPTDPQGVDSFAVWGAQAFTSGKHYWEVDVTLSSNWILGVCRDSRTADANFVIDSDERFFLISSKRSNHYSLSTNSPPLIQYVQRPLGRVGVFLDYDNGSVSFFDVSKGSLIYGFPPSSFSSPLRPFFCFGCT</sequence>